<dbReference type="EMBL" id="AF175715">
    <property type="protein sequence ID" value="AAD51068.1"/>
    <property type="molecule type" value="Genomic_DNA"/>
</dbReference>
<dbReference type="EMBL" id="AE015924">
    <property type="protein sequence ID" value="AAQ65867.1"/>
    <property type="molecule type" value="Genomic_DNA"/>
</dbReference>
<dbReference type="RefSeq" id="WP_005873620.1">
    <property type="nucleotide sequence ID" value="NC_002950.2"/>
</dbReference>
<dbReference type="SMR" id="Q9S3R8"/>
<dbReference type="STRING" id="242619.PG_0694"/>
<dbReference type="TCDB" id="1.B.6.1.6">
    <property type="family name" value="the ompa-ompf porin (oop) family"/>
</dbReference>
<dbReference type="EnsemblBacteria" id="AAQ65867">
    <property type="protein sequence ID" value="AAQ65867"/>
    <property type="gene ID" value="PG_0694"/>
</dbReference>
<dbReference type="KEGG" id="pgi:PG_0694"/>
<dbReference type="eggNOG" id="COG2885">
    <property type="taxonomic scope" value="Bacteria"/>
</dbReference>
<dbReference type="HOGENOM" id="CLU_058370_1_0_10"/>
<dbReference type="Proteomes" id="UP000000588">
    <property type="component" value="Chromosome"/>
</dbReference>
<dbReference type="GO" id="GO:0009279">
    <property type="term" value="C:cell outer membrane"/>
    <property type="evidence" value="ECO:0007669"/>
    <property type="project" value="UniProtKB-SubCell"/>
</dbReference>
<dbReference type="GO" id="GO:0019867">
    <property type="term" value="C:outer membrane"/>
    <property type="evidence" value="ECO:0000314"/>
    <property type="project" value="UniProtKB"/>
</dbReference>
<dbReference type="GO" id="GO:0030247">
    <property type="term" value="F:polysaccharide binding"/>
    <property type="evidence" value="ECO:0000304"/>
    <property type="project" value="UniProtKB"/>
</dbReference>
<dbReference type="GO" id="GO:0015288">
    <property type="term" value="F:porin activity"/>
    <property type="evidence" value="ECO:0000304"/>
    <property type="project" value="UniProtKB"/>
</dbReference>
<dbReference type="CDD" id="cd07185">
    <property type="entry name" value="OmpA_C-like"/>
    <property type="match status" value="1"/>
</dbReference>
<dbReference type="FunFam" id="3.30.1330.60:FF:000006">
    <property type="entry name" value="Outer membrane protein OmpA"/>
    <property type="match status" value="1"/>
</dbReference>
<dbReference type="Gene3D" id="3.30.1330.60">
    <property type="entry name" value="OmpA-like domain"/>
    <property type="match status" value="1"/>
</dbReference>
<dbReference type="InterPro" id="IPR050330">
    <property type="entry name" value="Bact_OuterMem_StrucFunc"/>
</dbReference>
<dbReference type="InterPro" id="IPR006665">
    <property type="entry name" value="OmpA-like"/>
</dbReference>
<dbReference type="InterPro" id="IPR006690">
    <property type="entry name" value="OMPA-like_CS"/>
</dbReference>
<dbReference type="InterPro" id="IPR036737">
    <property type="entry name" value="OmpA-like_sf"/>
</dbReference>
<dbReference type="PANTHER" id="PTHR30329:SF21">
    <property type="entry name" value="LIPOPROTEIN YIAD-RELATED"/>
    <property type="match status" value="1"/>
</dbReference>
<dbReference type="PANTHER" id="PTHR30329">
    <property type="entry name" value="STATOR ELEMENT OF FLAGELLAR MOTOR COMPLEX"/>
    <property type="match status" value="1"/>
</dbReference>
<dbReference type="Pfam" id="PF00691">
    <property type="entry name" value="OmpA"/>
    <property type="match status" value="1"/>
</dbReference>
<dbReference type="SUPFAM" id="SSF103088">
    <property type="entry name" value="OmpA-like"/>
    <property type="match status" value="1"/>
</dbReference>
<dbReference type="PROSITE" id="PS01068">
    <property type="entry name" value="OMPA_1"/>
    <property type="match status" value="1"/>
</dbReference>
<dbReference type="PROSITE" id="PS51123">
    <property type="entry name" value="OMPA_2"/>
    <property type="match status" value="1"/>
</dbReference>
<feature type="signal peptide" evidence="2">
    <location>
        <begin position="1"/>
        <end position="21"/>
    </location>
</feature>
<feature type="chain" id="PRO_0000020113" description="Outer membrane protein 40">
    <location>
        <begin position="22"/>
        <end position="380"/>
    </location>
</feature>
<feature type="domain" description="OmpA-like" evidence="1">
    <location>
        <begin position="270"/>
        <end position="380"/>
    </location>
</feature>
<feature type="modified residue" description="Pyrrolidone carboxylic acid" evidence="2">
    <location>
        <position position="22"/>
    </location>
</feature>
<keyword id="KW-0998">Cell outer membrane</keyword>
<keyword id="KW-0903">Direct protein sequencing</keyword>
<keyword id="KW-1015">Disulfide bond</keyword>
<keyword id="KW-0472">Membrane</keyword>
<keyword id="KW-0873">Pyrrolidone carboxylic acid</keyword>
<keyword id="KW-1185">Reference proteome</keyword>
<keyword id="KW-0732">Signal</keyword>
<keyword id="KW-0812">Transmembrane</keyword>
<keyword id="KW-1134">Transmembrane beta strand</keyword>
<organism>
    <name type="scientific">Porphyromonas gingivalis (strain ATCC BAA-308 / W83)</name>
    <dbReference type="NCBI Taxonomy" id="242619"/>
    <lineage>
        <taxon>Bacteria</taxon>
        <taxon>Pseudomonadati</taxon>
        <taxon>Bacteroidota</taxon>
        <taxon>Bacteroidia</taxon>
        <taxon>Bacteroidales</taxon>
        <taxon>Porphyromonadaceae</taxon>
        <taxon>Porphyromonas</taxon>
    </lineage>
</organism>
<proteinExistence type="evidence at protein level"/>
<sequence length="380" mass="42452">MKAKSLLLALAGLACTFSATAQEATTQNKAGMHTAFQRDKASDHWFIDIAGGAGMALSGWNNDVDFVDRLSIVPTFGIGKWHEPYFGTRLQFTGFDIYGFPQGSKERNHNYFGNAHLDFMFDLTNYFGVYRPNRVFHIIPWAGIGFGYKFHSENANGEKVGSKDDMTGTVNVGLMLKFRLSRVVDFNIEGQAFAGKMNFIGTKRGKADFPVMATAGLTFNLGKTEWTEIVPMDYALVNDLNNQINSLRGQVEELSRRPVSCPECPEPTQPTVTRVVVDNVVYFRINSAKIDRNQEINVYNTAEYAKTNNAPIKVVGYADEKTGTAAYNMKLSERRAKAVAKMLEKYGVSADRITIEWKGSSEQIYEENAWNRIVVMTAAE</sequence>
<evidence type="ECO:0000255" key="1">
    <source>
        <dbReference type="PROSITE-ProRule" id="PRU00473"/>
    </source>
</evidence>
<evidence type="ECO:0000269" key="2">
    <source>
    </source>
</evidence>
<evidence type="ECO:0000303" key="3">
    <source>
    </source>
</evidence>
<evidence type="ECO:0000305" key="4"/>
<comment type="function">
    <text evidence="3">May have porin activity and function in peptidoglycan binding.</text>
</comment>
<comment type="subunit">
    <text>Disulfide-linked heterodimer with Omp41.</text>
</comment>
<comment type="subcellular location">
    <subcellularLocation>
        <location evidence="4">Cell outer membrane</location>
        <topology evidence="4">Multi-pass membrane protein</topology>
    </subcellularLocation>
</comment>
<comment type="similarity">
    <text evidence="4">Belongs to the outer membrane OOP (TC 1.B.6) superfamily.</text>
</comment>
<gene>
    <name type="ordered locus">PG_0694</name>
</gene>
<accession>Q9S3R8</accession>
<reference evidence="4" key="1">
    <citation type="journal article" date="2001" name="Vaccine">
        <title>Identification of vaccine candidate antigens from a genomic analysis of Porphyromonas gingivalis.</title>
        <authorList>
            <person name="Ross B.C."/>
            <person name="Czajkowski L."/>
            <person name="Hocking D."/>
            <person name="Margetts M."/>
            <person name="Webb E."/>
            <person name="Rothel L."/>
            <person name="Patterson M."/>
            <person name="Agius C."/>
            <person name="Camuglia S."/>
            <person name="Reynolds E.C."/>
            <person name="Littlejohn T."/>
            <person name="Gaeta B."/>
            <person name="Ng A."/>
            <person name="Kuczek E.S."/>
            <person name="Mattick J.S."/>
            <person name="Gearing D.P."/>
            <person name="Barr I.G."/>
        </authorList>
    </citation>
    <scope>NUCLEOTIDE SEQUENCE [GENOMIC DNA]</scope>
    <source>
        <strain>ATCC 53978 / W50</strain>
    </source>
</reference>
<reference key="2">
    <citation type="journal article" date="2003" name="J. Bacteriol.">
        <title>Complete genome sequence of the oral pathogenic bacterium Porphyromonas gingivalis strain W83.</title>
        <authorList>
            <person name="Nelson K.E."/>
            <person name="Fleischmann R.D."/>
            <person name="DeBoy R.T."/>
            <person name="Paulsen I.T."/>
            <person name="Fouts D.E."/>
            <person name="Eisen J.A."/>
            <person name="Daugherty S.C."/>
            <person name="Dodson R.J."/>
            <person name="Durkin A.S."/>
            <person name="Gwinn M.L."/>
            <person name="Haft D.H."/>
            <person name="Kolonay J.F."/>
            <person name="Nelson W.C."/>
            <person name="Mason T.M."/>
            <person name="Tallon L."/>
            <person name="Gray J."/>
            <person name="Granger D."/>
            <person name="Tettelin H."/>
            <person name="Dong H."/>
            <person name="Galvin J.L."/>
            <person name="Duncan M.J."/>
            <person name="Dewhirst F.E."/>
            <person name="Fraser C.M."/>
        </authorList>
    </citation>
    <scope>NUCLEOTIDE SEQUENCE [LARGE SCALE GENOMIC DNA]</scope>
    <source>
        <strain>ATCC BAA-308 / W83</strain>
    </source>
</reference>
<reference evidence="4" key="3">
    <citation type="journal article" date="2001" name="Eur. J. Biochem.">
        <title>Identification of a novel heterodimeric outer membrane protein of Porphyromonas gingivalis by two-dimensional gel electrophoresis and peptide mass fingerprinting.</title>
        <authorList>
            <person name="Veith P.D."/>
            <person name="Talbo G.H."/>
            <person name="Slakeski N."/>
            <person name="Reynolds E.C."/>
        </authorList>
    </citation>
    <scope>PROTEIN SEQUENCE OF 22-380</scope>
    <scope>PYROGLUTAMATE FORMATION AT GLN-22</scope>
    <source>
        <strain>ATCC 53978 / W50</strain>
    </source>
</reference>
<protein>
    <recommendedName>
        <fullName>Outer membrane protein 40</fullName>
        <shortName>Omp40</shortName>
    </recommendedName>
    <alternativeName>
        <fullName>PG33</fullName>
    </alternativeName>
</protein>
<name>OMP40_PORGI</name>